<gene>
    <name evidence="1" type="primary">rpoC2</name>
</gene>
<evidence type="ECO:0000255" key="1">
    <source>
        <dbReference type="HAMAP-Rule" id="MF_01324"/>
    </source>
</evidence>
<reference key="1">
    <citation type="journal article" date="2007" name="BMC Plant Biol.">
        <title>Complete plastid genome sequences suggest strong selection for retention of photosynthetic genes in the parasitic plant genus Cuscuta.</title>
        <authorList>
            <person name="McNeal J.R."/>
            <person name="Kuehl J.V."/>
            <person name="Boore J.L."/>
            <person name="dePamphilis C.W."/>
        </authorList>
    </citation>
    <scope>NUCLEOTIDE SEQUENCE [LARGE SCALE GENOMIC DNA]</scope>
</reference>
<protein>
    <recommendedName>
        <fullName evidence="1">DNA-directed RNA polymerase subunit beta''</fullName>
        <ecNumber evidence="1">2.7.7.6</ecNumber>
    </recommendedName>
    <alternativeName>
        <fullName evidence="1">PEP</fullName>
    </alternativeName>
    <alternativeName>
        <fullName evidence="1">Plastid-encoded RNA polymerase subunit beta''</fullName>
        <shortName evidence="1">RNA polymerase subunit beta''</shortName>
    </alternativeName>
</protein>
<geneLocation type="chloroplast"/>
<name>RPOC2_IPOPU</name>
<comment type="function">
    <text evidence="1">DNA-dependent RNA polymerase catalyzes the transcription of DNA into RNA using the four ribonucleoside triphosphates as substrates.</text>
</comment>
<comment type="catalytic activity">
    <reaction evidence="1">
        <text>RNA(n) + a ribonucleoside 5'-triphosphate = RNA(n+1) + diphosphate</text>
        <dbReference type="Rhea" id="RHEA:21248"/>
        <dbReference type="Rhea" id="RHEA-COMP:14527"/>
        <dbReference type="Rhea" id="RHEA-COMP:17342"/>
        <dbReference type="ChEBI" id="CHEBI:33019"/>
        <dbReference type="ChEBI" id="CHEBI:61557"/>
        <dbReference type="ChEBI" id="CHEBI:140395"/>
        <dbReference type="EC" id="2.7.7.6"/>
    </reaction>
</comment>
<comment type="cofactor">
    <cofactor evidence="1">
        <name>Zn(2+)</name>
        <dbReference type="ChEBI" id="CHEBI:29105"/>
    </cofactor>
    <text evidence="1">Binds 1 Zn(2+) ion per subunit.</text>
</comment>
<comment type="subunit">
    <text evidence="1">In plastids the minimal PEP RNA polymerase catalytic core is composed of four subunits: alpha, beta, beta', and beta''. When a (nuclear-encoded) sigma factor is associated with the core the holoenzyme is formed, which can initiate transcription.</text>
</comment>
<comment type="subcellular location">
    <subcellularLocation>
        <location evidence="1">Plastid</location>
        <location evidence="1">Chloroplast</location>
    </subcellularLocation>
</comment>
<comment type="similarity">
    <text evidence="1">Belongs to the RNA polymerase beta' chain family. RpoC2 subfamily.</text>
</comment>
<feature type="chain" id="PRO_0000353565" description="DNA-directed RNA polymerase subunit beta''">
    <location>
        <begin position="1"/>
        <end position="1401"/>
    </location>
</feature>
<feature type="binding site" evidence="1">
    <location>
        <position position="224"/>
    </location>
    <ligand>
        <name>Zn(2+)</name>
        <dbReference type="ChEBI" id="CHEBI:29105"/>
    </ligand>
</feature>
<feature type="binding site" evidence="1">
    <location>
        <position position="295"/>
    </location>
    <ligand>
        <name>Zn(2+)</name>
        <dbReference type="ChEBI" id="CHEBI:29105"/>
    </ligand>
</feature>
<feature type="binding site" evidence="1">
    <location>
        <position position="302"/>
    </location>
    <ligand>
        <name>Zn(2+)</name>
        <dbReference type="ChEBI" id="CHEBI:29105"/>
    </ligand>
</feature>
<feature type="binding site" evidence="1">
    <location>
        <position position="305"/>
    </location>
    <ligand>
        <name>Zn(2+)</name>
        <dbReference type="ChEBI" id="CHEBI:29105"/>
    </ligand>
</feature>
<sequence>MEVLMAERANLVFHNKVIDGTAMKRLISRLINHFGMAYTSHILDQVKTLGFQQATATSISLGIDDLLTIPSKGWLVQDAEQQSLILEKHHHYGNVHAVEKLRQSIEIWYATSEYLRQEMNPNFRMTDPLNPVHIMSFSGARGNASQVHQLVGMRGLMSDPQGQMIDLPIQSNLREGLSLTEYIISCYGARKGVVDTAVRTSDAGYLTRRLVEVVQHIVVRRADCGTVRGVSVSPQNGMMPERILIQTLIGRVLADDIYIGPRCIATRNQNIGVGLVNRFITFRAQPISIRTPFTCRSTSWICRLCYGRSPTHGDLVELGEAVGIIAGQSIGEPGTQLTLRTFHTGGVFTGGTAEHVRAPSNGKIRFHEDLVHPTRTRHGHPAFLCSIDLYVTIESEDILHNVNIPPKSFLLVQNDQYVESEQVIAEIRAGTSTLNLKEKVRKHIYSDSDGEMHWSTDVYHAPEFTYGNVHLLSKTSHLWILLGEPCRSSLVSLSIHRDQDQKSAHSLFVKRRSISNLSETNDRARQKIFSAHFSGQKEDRIADYSDLNRIICTDHSNLVYPAILPILAENSDFLSNLLSKRRRNQFIIPLQSIQERKKELMPCSGISMKIPTNGIFCGNSIIAYFDDPRYRRMSSGSTKYGTLEMHSIVKKEDLIQYRGVREFRPKHQKKVDRFFFIPEEVHILPGSSSISIMVRNNSIIGVDTQITLNIRSRVGGLVRVEKKKKRIELKIFSGDIYFPGRADKISRHSGVLIPPGTRKTNEKESKKVKNWIYVQRITPSKKKFFVLVRPVVTYEIMDGITLATLFPPDLLQERDNVQLRVVNYILYGNGKPIRGISDTSIQLVRTCLVLNWNQDKKSSSSEAARASVVELRTNDLIRHFLRIDFVKSPISYIGKRNDPWGLGLLADNGLDWTNINPYSKARIQQTLNQNQGTIHTFLNRNKGCQSLSILSSSNCSRMDPVNGAKYHNVIQESIQEDPLIPIRNSLGPLGTSLPIANFYSFDRLLTHNQILVTNYLQLDNLKQPFQVLKLKYYLIAENGKIYNPNPRSKILLNPLNLNWYFLHHNYCAETSKIMSLGQFICENVFIAKKRPPLKSGQVILVQVDSVVIRSAKPYLATPGATVRGLYGETFYEGDTLVTFHYEKSRSGDITQGLPKVEQVLEVRSVDSISMNLERRVEGWNKCLTRILGIPWGFLIGAELTIAQSRISLVNKIQKVYRSQGVQIHNRHIEIIVRQITSNVLVSEDGMSNVFSPGELIRLLRAKRMGRALEEAICYRALLLGITKASLNTQSFISEASFQETARVLAKAALQGRIDWLKGLKENVVLGGVIPAGTGFRGLVHPSKQYNNLSLETTKKNLFEGGVRDILSHHRKLLDSSLSKKFHNTSHNTIHQTIIYRIYNDS</sequence>
<keyword id="KW-0150">Chloroplast</keyword>
<keyword id="KW-0240">DNA-directed RNA polymerase</keyword>
<keyword id="KW-0479">Metal-binding</keyword>
<keyword id="KW-0548">Nucleotidyltransferase</keyword>
<keyword id="KW-0934">Plastid</keyword>
<keyword id="KW-0804">Transcription</keyword>
<keyword id="KW-0808">Transferase</keyword>
<keyword id="KW-0862">Zinc</keyword>
<accession>A7Y3B4</accession>
<dbReference type="EC" id="2.7.7.6" evidence="1"/>
<dbReference type="EMBL" id="EU118126">
    <property type="protein sequence ID" value="ABV02338.1"/>
    <property type="molecule type" value="Genomic_DNA"/>
</dbReference>
<dbReference type="RefSeq" id="YP_001468298.1">
    <property type="nucleotide sequence ID" value="NC_009808.1"/>
</dbReference>
<dbReference type="SMR" id="A7Y3B4"/>
<dbReference type="GeneID" id="5601317"/>
<dbReference type="GO" id="GO:0009507">
    <property type="term" value="C:chloroplast"/>
    <property type="evidence" value="ECO:0007669"/>
    <property type="project" value="UniProtKB-SubCell"/>
</dbReference>
<dbReference type="GO" id="GO:0000428">
    <property type="term" value="C:DNA-directed RNA polymerase complex"/>
    <property type="evidence" value="ECO:0007669"/>
    <property type="project" value="UniProtKB-KW"/>
</dbReference>
<dbReference type="GO" id="GO:0005739">
    <property type="term" value="C:mitochondrion"/>
    <property type="evidence" value="ECO:0007669"/>
    <property type="project" value="GOC"/>
</dbReference>
<dbReference type="GO" id="GO:0003677">
    <property type="term" value="F:DNA binding"/>
    <property type="evidence" value="ECO:0007669"/>
    <property type="project" value="UniProtKB-UniRule"/>
</dbReference>
<dbReference type="GO" id="GO:0003899">
    <property type="term" value="F:DNA-directed RNA polymerase activity"/>
    <property type="evidence" value="ECO:0007669"/>
    <property type="project" value="UniProtKB-UniRule"/>
</dbReference>
<dbReference type="GO" id="GO:0008270">
    <property type="term" value="F:zinc ion binding"/>
    <property type="evidence" value="ECO:0007669"/>
    <property type="project" value="UniProtKB-UniRule"/>
</dbReference>
<dbReference type="GO" id="GO:0006351">
    <property type="term" value="P:DNA-templated transcription"/>
    <property type="evidence" value="ECO:0007669"/>
    <property type="project" value="UniProtKB-UniRule"/>
</dbReference>
<dbReference type="CDD" id="cd02655">
    <property type="entry name" value="RNAP_beta'_C"/>
    <property type="match status" value="1"/>
</dbReference>
<dbReference type="FunFam" id="1.10.132.30:FF:000002">
    <property type="entry name" value="DNA-directed RNA polymerase subunit beta"/>
    <property type="match status" value="1"/>
</dbReference>
<dbReference type="Gene3D" id="1.10.132.30">
    <property type="match status" value="1"/>
</dbReference>
<dbReference type="Gene3D" id="1.10.150.390">
    <property type="match status" value="1"/>
</dbReference>
<dbReference type="Gene3D" id="1.10.1790.20">
    <property type="match status" value="1"/>
</dbReference>
<dbReference type="Gene3D" id="1.10.274.100">
    <property type="entry name" value="RNA polymerase Rpb1, domain 3"/>
    <property type="match status" value="1"/>
</dbReference>
<dbReference type="HAMAP" id="MF_01324">
    <property type="entry name" value="RNApol_bact_RpoC2"/>
    <property type="match status" value="1"/>
</dbReference>
<dbReference type="InterPro" id="IPR012756">
    <property type="entry name" value="DNA-dir_RpoC2_beta_pp"/>
</dbReference>
<dbReference type="InterPro" id="IPR050254">
    <property type="entry name" value="RNA_pol_beta''_euk"/>
</dbReference>
<dbReference type="InterPro" id="IPR042102">
    <property type="entry name" value="RNA_pol_Rpb1_3_sf"/>
</dbReference>
<dbReference type="InterPro" id="IPR007083">
    <property type="entry name" value="RNA_pol_Rpb1_4"/>
</dbReference>
<dbReference type="InterPro" id="IPR007081">
    <property type="entry name" value="RNA_pol_Rpb1_5"/>
</dbReference>
<dbReference type="InterPro" id="IPR038120">
    <property type="entry name" value="Rpb1_funnel_sf"/>
</dbReference>
<dbReference type="NCBIfam" id="TIGR02388">
    <property type="entry name" value="rpoC2_cyan"/>
    <property type="match status" value="1"/>
</dbReference>
<dbReference type="PANTHER" id="PTHR34995">
    <property type="entry name" value="DNA-DIRECTED RNA POLYMERASE SUBUNIT BETA"/>
    <property type="match status" value="1"/>
</dbReference>
<dbReference type="PANTHER" id="PTHR34995:SF1">
    <property type="entry name" value="DNA-DIRECTED RNA POLYMERASE SUBUNIT BETA"/>
    <property type="match status" value="1"/>
</dbReference>
<dbReference type="Pfam" id="PF05000">
    <property type="entry name" value="RNA_pol_Rpb1_4"/>
    <property type="match status" value="1"/>
</dbReference>
<dbReference type="Pfam" id="PF04998">
    <property type="entry name" value="RNA_pol_Rpb1_5"/>
    <property type="match status" value="2"/>
</dbReference>
<dbReference type="SUPFAM" id="SSF64484">
    <property type="entry name" value="beta and beta-prime subunits of DNA dependent RNA-polymerase"/>
    <property type="match status" value="1"/>
</dbReference>
<organism>
    <name type="scientific">Ipomoea purpurea</name>
    <name type="common">Common morning glory</name>
    <name type="synonym">Pharbitis purpurea</name>
    <dbReference type="NCBI Taxonomy" id="4121"/>
    <lineage>
        <taxon>Eukaryota</taxon>
        <taxon>Viridiplantae</taxon>
        <taxon>Streptophyta</taxon>
        <taxon>Embryophyta</taxon>
        <taxon>Tracheophyta</taxon>
        <taxon>Spermatophyta</taxon>
        <taxon>Magnoliopsida</taxon>
        <taxon>eudicotyledons</taxon>
        <taxon>Gunneridae</taxon>
        <taxon>Pentapetalae</taxon>
        <taxon>asterids</taxon>
        <taxon>lamiids</taxon>
        <taxon>Solanales</taxon>
        <taxon>Convolvulaceae</taxon>
        <taxon>Ipomoeeae</taxon>
        <taxon>Ipomoea</taxon>
    </lineage>
</organism>
<proteinExistence type="inferred from homology"/>